<proteinExistence type="inferred from homology"/>
<feature type="chain" id="PRO_0000081098" description="Transcriptional regulatory protein DegU">
    <location>
        <begin position="1"/>
        <end position="236"/>
    </location>
</feature>
<feature type="domain" description="Response regulatory" evidence="2">
    <location>
        <begin position="11"/>
        <end position="127"/>
    </location>
</feature>
<feature type="domain" description="HTH luxR-type" evidence="3">
    <location>
        <begin position="166"/>
        <end position="231"/>
    </location>
</feature>
<feature type="DNA-binding region" description="H-T-H motif" evidence="3">
    <location>
        <begin position="190"/>
        <end position="209"/>
    </location>
</feature>
<feature type="modified residue" description="4-aspartylphosphate" evidence="2">
    <location>
        <position position="62"/>
    </location>
</feature>
<organism>
    <name type="scientific">Brevibacillus brevis</name>
    <name type="common">Bacillus brevis</name>
    <dbReference type="NCBI Taxonomy" id="1393"/>
    <lineage>
        <taxon>Bacteria</taxon>
        <taxon>Bacillati</taxon>
        <taxon>Bacillota</taxon>
        <taxon>Bacilli</taxon>
        <taxon>Bacillales</taxon>
        <taxon>Paenibacillaceae</taxon>
        <taxon>Brevibacillus</taxon>
    </lineage>
</organism>
<gene>
    <name type="primary">degU</name>
</gene>
<protein>
    <recommendedName>
        <fullName>Transcriptional regulatory protein DegU</fullName>
    </recommendedName>
</protein>
<evidence type="ECO:0000250" key="1"/>
<evidence type="ECO:0000255" key="2">
    <source>
        <dbReference type="PROSITE-ProRule" id="PRU00169"/>
    </source>
</evidence>
<evidence type="ECO:0000255" key="3">
    <source>
        <dbReference type="PROSITE-ProRule" id="PRU00411"/>
    </source>
</evidence>
<reference key="1">
    <citation type="journal article" date="1994" name="Appl. Microbiol. Biotechnol.">
        <title>Cloning and sequencing the degS-degU operon from an alkalophilic Bacillus brevis.</title>
        <authorList>
            <person name="Louw M.E."/>
            <person name="Reid S.J."/>
            <person name="James M.D."/>
            <person name="Watson T.G."/>
        </authorList>
    </citation>
    <scope>NUCLEOTIDE SEQUENCE [GENOMIC DNA]</scope>
    <source>
        <strain>Alk36</strain>
    </source>
</reference>
<sequence>MNEQVNENKIQIVIIDDHQLFREGVKRILAMEPEFEVVADGEDGENAVELVEKYNPDVILMDINMPKVNGVEATRDLIQRYPDVKVLVLSIHDDESYVTHVLKTGASGYLLKEMDADALIEAVKVVAQGGAYIHPKVTHNLIKEYRRLVNEDEQESSEIGFKEVEYRKPLHILTRRECEVLQLMTDGYSNRMIGEALYISEKTVKNHVSNILQKMNVNDRTQAVVESIKNGWVKVR</sequence>
<keyword id="KW-0010">Activator</keyword>
<keyword id="KW-0963">Cytoplasm</keyword>
<keyword id="KW-0238">DNA-binding</keyword>
<keyword id="KW-0597">Phosphoprotein</keyword>
<keyword id="KW-0678">Repressor</keyword>
<keyword id="KW-0804">Transcription</keyword>
<keyword id="KW-0805">Transcription regulation</keyword>
<keyword id="KW-0902">Two-component regulatory system</keyword>
<dbReference type="EMBL" id="L15444">
    <property type="protein sequence ID" value="AAC41439.1"/>
    <property type="molecule type" value="Genomic_DNA"/>
</dbReference>
<dbReference type="PIR" id="I39835">
    <property type="entry name" value="I39835"/>
</dbReference>
<dbReference type="SMR" id="P54662"/>
<dbReference type="GO" id="GO:0005737">
    <property type="term" value="C:cytoplasm"/>
    <property type="evidence" value="ECO:0007669"/>
    <property type="project" value="UniProtKB-SubCell"/>
</dbReference>
<dbReference type="GO" id="GO:0003677">
    <property type="term" value="F:DNA binding"/>
    <property type="evidence" value="ECO:0007669"/>
    <property type="project" value="UniProtKB-KW"/>
</dbReference>
<dbReference type="GO" id="GO:0000160">
    <property type="term" value="P:phosphorelay signal transduction system"/>
    <property type="evidence" value="ECO:0007669"/>
    <property type="project" value="UniProtKB-KW"/>
</dbReference>
<dbReference type="GO" id="GO:0006355">
    <property type="term" value="P:regulation of DNA-templated transcription"/>
    <property type="evidence" value="ECO:0007669"/>
    <property type="project" value="InterPro"/>
</dbReference>
<dbReference type="CDD" id="cd06170">
    <property type="entry name" value="LuxR_C_like"/>
    <property type="match status" value="1"/>
</dbReference>
<dbReference type="CDD" id="cd17535">
    <property type="entry name" value="REC_NarL-like"/>
    <property type="match status" value="1"/>
</dbReference>
<dbReference type="Gene3D" id="3.40.50.2300">
    <property type="match status" value="1"/>
</dbReference>
<dbReference type="InterPro" id="IPR011006">
    <property type="entry name" value="CheY-like_superfamily"/>
</dbReference>
<dbReference type="InterPro" id="IPR016032">
    <property type="entry name" value="Sig_transdc_resp-reg_C-effctor"/>
</dbReference>
<dbReference type="InterPro" id="IPR001789">
    <property type="entry name" value="Sig_transdc_resp-reg_receiver"/>
</dbReference>
<dbReference type="InterPro" id="IPR000792">
    <property type="entry name" value="Tscrpt_reg_LuxR_C"/>
</dbReference>
<dbReference type="InterPro" id="IPR039420">
    <property type="entry name" value="WalR-like"/>
</dbReference>
<dbReference type="PANTHER" id="PTHR43214:SF39">
    <property type="entry name" value="TRANSCRIPTIONAL REGULATORY PROTEIN DEGU"/>
    <property type="match status" value="1"/>
</dbReference>
<dbReference type="PANTHER" id="PTHR43214">
    <property type="entry name" value="TWO-COMPONENT RESPONSE REGULATOR"/>
    <property type="match status" value="1"/>
</dbReference>
<dbReference type="Pfam" id="PF00196">
    <property type="entry name" value="GerE"/>
    <property type="match status" value="1"/>
</dbReference>
<dbReference type="Pfam" id="PF00072">
    <property type="entry name" value="Response_reg"/>
    <property type="match status" value="1"/>
</dbReference>
<dbReference type="PRINTS" id="PR00038">
    <property type="entry name" value="HTHLUXR"/>
</dbReference>
<dbReference type="SMART" id="SM00421">
    <property type="entry name" value="HTH_LUXR"/>
    <property type="match status" value="1"/>
</dbReference>
<dbReference type="SMART" id="SM00448">
    <property type="entry name" value="REC"/>
    <property type="match status" value="1"/>
</dbReference>
<dbReference type="SUPFAM" id="SSF46894">
    <property type="entry name" value="C-terminal effector domain of the bipartite response regulators"/>
    <property type="match status" value="1"/>
</dbReference>
<dbReference type="SUPFAM" id="SSF52172">
    <property type="entry name" value="CheY-like"/>
    <property type="match status" value="1"/>
</dbReference>
<dbReference type="PROSITE" id="PS00622">
    <property type="entry name" value="HTH_LUXR_1"/>
    <property type="match status" value="1"/>
</dbReference>
<dbReference type="PROSITE" id="PS50043">
    <property type="entry name" value="HTH_LUXR_2"/>
    <property type="match status" value="1"/>
</dbReference>
<dbReference type="PROSITE" id="PS50110">
    <property type="entry name" value="RESPONSE_REGULATORY"/>
    <property type="match status" value="1"/>
</dbReference>
<name>DEGU_BREBE</name>
<accession>P54662</accession>
<comment type="function">
    <text evidence="1">Member of the two-component regulatory system DegS/DegU, which plays an important role in the transition growth phase.</text>
</comment>
<comment type="subcellular location">
    <subcellularLocation>
        <location evidence="1">Cytoplasm</location>
    </subcellularLocation>
</comment>
<comment type="PTM">
    <text evidence="1">Phosphorylated and dephosphorylated by DegS.</text>
</comment>